<name>MRH4_CRYNB</name>
<keyword id="KW-0067">ATP-binding</keyword>
<keyword id="KW-0347">Helicase</keyword>
<keyword id="KW-0378">Hydrolase</keyword>
<keyword id="KW-0496">Mitochondrion</keyword>
<keyword id="KW-0547">Nucleotide-binding</keyword>
<keyword id="KW-0694">RNA-binding</keyword>
<keyword id="KW-0809">Transit peptide</keyword>
<gene>
    <name type="primary">MRH4</name>
    <name type="ordered locus">CNBC7120</name>
</gene>
<comment type="function">
    <text evidence="1">ATP-binding RNA helicase involved in mitochondrial RNA metabolism. Required for maintenance of mitochondrial DNA (By similarity).</text>
</comment>
<comment type="catalytic activity">
    <reaction>
        <text>ATP + H2O = ADP + phosphate + H(+)</text>
        <dbReference type="Rhea" id="RHEA:13065"/>
        <dbReference type="ChEBI" id="CHEBI:15377"/>
        <dbReference type="ChEBI" id="CHEBI:15378"/>
        <dbReference type="ChEBI" id="CHEBI:30616"/>
        <dbReference type="ChEBI" id="CHEBI:43474"/>
        <dbReference type="ChEBI" id="CHEBI:456216"/>
        <dbReference type="EC" id="3.6.4.13"/>
    </reaction>
</comment>
<comment type="subcellular location">
    <subcellularLocation>
        <location evidence="1">Mitochondrion</location>
    </subcellularLocation>
</comment>
<comment type="domain">
    <text>The Q motif is unique to and characteristic of the DEAD box family of RNA helicases and controls ATP binding and hydrolysis.</text>
</comment>
<comment type="similarity">
    <text evidence="6">Belongs to the DEAD box helicase family. MRH4 subfamily.</text>
</comment>
<dbReference type="EC" id="3.6.4.13"/>
<dbReference type="EMBL" id="AAEY01000017">
    <property type="protein sequence ID" value="EAL21676.1"/>
    <property type="molecule type" value="Genomic_DNA"/>
</dbReference>
<dbReference type="RefSeq" id="XP_776323.1">
    <property type="nucleotide sequence ID" value="XM_771230.1"/>
</dbReference>
<dbReference type="SMR" id="P0CR13"/>
<dbReference type="EnsemblFungi" id="AAW42060">
    <property type="protein sequence ID" value="AAW42060"/>
    <property type="gene ID" value="CNC00100"/>
</dbReference>
<dbReference type="GeneID" id="4935380"/>
<dbReference type="KEGG" id="cnb:CNBC7120"/>
<dbReference type="VEuPathDB" id="FungiDB:CNBC7120"/>
<dbReference type="HOGENOM" id="CLU_003041_18_1_1"/>
<dbReference type="OrthoDB" id="8538at5206"/>
<dbReference type="GO" id="GO:0005739">
    <property type="term" value="C:mitochondrion"/>
    <property type="evidence" value="ECO:0007669"/>
    <property type="project" value="UniProtKB-SubCell"/>
</dbReference>
<dbReference type="GO" id="GO:0005524">
    <property type="term" value="F:ATP binding"/>
    <property type="evidence" value="ECO:0007669"/>
    <property type="project" value="UniProtKB-KW"/>
</dbReference>
<dbReference type="GO" id="GO:0016887">
    <property type="term" value="F:ATP hydrolysis activity"/>
    <property type="evidence" value="ECO:0007669"/>
    <property type="project" value="RHEA"/>
</dbReference>
<dbReference type="GO" id="GO:0003723">
    <property type="term" value="F:RNA binding"/>
    <property type="evidence" value="ECO:0007669"/>
    <property type="project" value="UniProtKB-KW"/>
</dbReference>
<dbReference type="GO" id="GO:0003724">
    <property type="term" value="F:RNA helicase activity"/>
    <property type="evidence" value="ECO:0007669"/>
    <property type="project" value="UniProtKB-EC"/>
</dbReference>
<dbReference type="Gene3D" id="3.40.50.300">
    <property type="entry name" value="P-loop containing nucleotide triphosphate hydrolases"/>
    <property type="match status" value="2"/>
</dbReference>
<dbReference type="InterPro" id="IPR011545">
    <property type="entry name" value="DEAD/DEAH_box_helicase_dom"/>
</dbReference>
<dbReference type="InterPro" id="IPR014001">
    <property type="entry name" value="Helicase_ATP-bd"/>
</dbReference>
<dbReference type="InterPro" id="IPR001650">
    <property type="entry name" value="Helicase_C-like"/>
</dbReference>
<dbReference type="InterPro" id="IPR027417">
    <property type="entry name" value="P-loop_NTPase"/>
</dbReference>
<dbReference type="PANTHER" id="PTHR24031">
    <property type="entry name" value="RNA HELICASE"/>
    <property type="match status" value="1"/>
</dbReference>
<dbReference type="Pfam" id="PF00270">
    <property type="entry name" value="DEAD"/>
    <property type="match status" value="1"/>
</dbReference>
<dbReference type="Pfam" id="PF00271">
    <property type="entry name" value="Helicase_C"/>
    <property type="match status" value="1"/>
</dbReference>
<dbReference type="SMART" id="SM00487">
    <property type="entry name" value="DEXDc"/>
    <property type="match status" value="1"/>
</dbReference>
<dbReference type="SMART" id="SM00490">
    <property type="entry name" value="HELICc"/>
    <property type="match status" value="1"/>
</dbReference>
<dbReference type="SUPFAM" id="SSF52540">
    <property type="entry name" value="P-loop containing nucleoside triphosphate hydrolases"/>
    <property type="match status" value="1"/>
</dbReference>
<dbReference type="PROSITE" id="PS51192">
    <property type="entry name" value="HELICASE_ATP_BIND_1"/>
    <property type="match status" value="1"/>
</dbReference>
<dbReference type="PROSITE" id="PS51194">
    <property type="entry name" value="HELICASE_CTER"/>
    <property type="match status" value="1"/>
</dbReference>
<dbReference type="PROSITE" id="PS51195">
    <property type="entry name" value="Q_MOTIF"/>
    <property type="match status" value="1"/>
</dbReference>
<proteinExistence type="inferred from homology"/>
<reference key="1">
    <citation type="journal article" date="2005" name="Science">
        <title>The genome of the basidiomycetous yeast and human pathogen Cryptococcus neoformans.</title>
        <authorList>
            <person name="Loftus B.J."/>
            <person name="Fung E."/>
            <person name="Roncaglia P."/>
            <person name="Rowley D."/>
            <person name="Amedeo P."/>
            <person name="Bruno D."/>
            <person name="Vamathevan J."/>
            <person name="Miranda M."/>
            <person name="Anderson I.J."/>
            <person name="Fraser J.A."/>
            <person name="Allen J.E."/>
            <person name="Bosdet I.E."/>
            <person name="Brent M.R."/>
            <person name="Chiu R."/>
            <person name="Doering T.L."/>
            <person name="Donlin M.J."/>
            <person name="D'Souza C.A."/>
            <person name="Fox D.S."/>
            <person name="Grinberg V."/>
            <person name="Fu J."/>
            <person name="Fukushima M."/>
            <person name="Haas B.J."/>
            <person name="Huang J.C."/>
            <person name="Janbon G."/>
            <person name="Jones S.J.M."/>
            <person name="Koo H.L."/>
            <person name="Krzywinski M.I."/>
            <person name="Kwon-Chung K.J."/>
            <person name="Lengeler K.B."/>
            <person name="Maiti R."/>
            <person name="Marra M.A."/>
            <person name="Marra R.E."/>
            <person name="Mathewson C.A."/>
            <person name="Mitchell T.G."/>
            <person name="Pertea M."/>
            <person name="Riggs F.R."/>
            <person name="Salzberg S.L."/>
            <person name="Schein J.E."/>
            <person name="Shvartsbeyn A."/>
            <person name="Shin H."/>
            <person name="Shumway M."/>
            <person name="Specht C.A."/>
            <person name="Suh B.B."/>
            <person name="Tenney A."/>
            <person name="Utterback T.R."/>
            <person name="Wickes B.L."/>
            <person name="Wortman J.R."/>
            <person name="Wye N.H."/>
            <person name="Kronstad J.W."/>
            <person name="Lodge J.K."/>
            <person name="Heitman J."/>
            <person name="Davis R.W."/>
            <person name="Fraser C.M."/>
            <person name="Hyman R.W."/>
        </authorList>
    </citation>
    <scope>NUCLEOTIDE SEQUENCE [LARGE SCALE GENOMIC DNA]</scope>
    <source>
        <strain>B-3501A</strain>
    </source>
</reference>
<evidence type="ECO:0000250" key="1"/>
<evidence type="ECO:0000255" key="2"/>
<evidence type="ECO:0000255" key="3">
    <source>
        <dbReference type="PROSITE-ProRule" id="PRU00541"/>
    </source>
</evidence>
<evidence type="ECO:0000255" key="4">
    <source>
        <dbReference type="PROSITE-ProRule" id="PRU00542"/>
    </source>
</evidence>
<evidence type="ECO:0000256" key="5">
    <source>
        <dbReference type="SAM" id="MobiDB-lite"/>
    </source>
</evidence>
<evidence type="ECO:0000305" key="6"/>
<protein>
    <recommendedName>
        <fullName>ATP-dependent RNA helicase MRH4, mitochondrial</fullName>
        <ecNumber>3.6.4.13</ecNumber>
    </recommendedName>
</protein>
<organism>
    <name type="scientific">Cryptococcus neoformans var. neoformans serotype D (strain B-3501A)</name>
    <name type="common">Filobasidiella neoformans</name>
    <dbReference type="NCBI Taxonomy" id="283643"/>
    <lineage>
        <taxon>Eukaryota</taxon>
        <taxon>Fungi</taxon>
        <taxon>Dikarya</taxon>
        <taxon>Basidiomycota</taxon>
        <taxon>Agaricomycotina</taxon>
        <taxon>Tremellomycetes</taxon>
        <taxon>Tremellales</taxon>
        <taxon>Cryptococcaceae</taxon>
        <taxon>Cryptococcus</taxon>
        <taxon>Cryptococcus neoformans species complex</taxon>
    </lineage>
</organism>
<accession>P0CR13</accession>
<accession>Q55UW9</accession>
<accession>Q5KLB2</accession>
<sequence>MPPNLTPRSFNRDDGVTEEYINGLPAYPTPPTTLANEEQARPRTFDDFGLEEGLVKSLKGLYGEDGKTTPIETLSFHHFTQPDIASAPIGSQRVLLGAETGSGKTVSYLIPLFHHLKRTDPGPSVTSSFFADSENTLHPRSIILSPTHELTRQSTQFAKILTHNTKLSVHGMSSTVSGGVGEKRGSVDVLLGTVGSLRRMFGMTRSEEEQEKEDYIRGKRIWQDEQEKGMVEGDKVEWVVIDEADVLLGREFYLDTISVLSQVKQANLILCTATLPPFLINLLTTNPFFTKKEPFIHLLSPGLHKLPPKLLTRFIRPSTTGNKHGDVAHQVRLTLAEDAKAAKAEGREGEEPSKIVIFCNSDKQVEQVSGILGTKKIDCLAWTGAGEERLRGRNGSLNDFLQRPHLPGHEPPAPLPSLEPRETKPIFQDKNGTTPNVSQVTRRRVLVTTSLLSRGLDFHPSVSSVFLVQPPRDVLDFVHRAGRAGRAGRPGRVVVFGIDEGGTLGEGAKNNKGGKGQGPLKKDGKTALGDRLKDVLGKREVVGAMGKRVRT</sequence>
<feature type="transit peptide" description="Mitochondrion" evidence="2">
    <location>
        <begin position="1"/>
        <end position="13"/>
    </location>
</feature>
<feature type="chain" id="PRO_0000410267" description="ATP-dependent RNA helicase MRH4, mitochondrial">
    <location>
        <begin position="14"/>
        <end position="551"/>
    </location>
</feature>
<feature type="domain" description="Helicase ATP-binding" evidence="3">
    <location>
        <begin position="85"/>
        <end position="293"/>
    </location>
</feature>
<feature type="domain" description="Helicase C-terminal" evidence="4">
    <location>
        <begin position="334"/>
        <end position="551"/>
    </location>
</feature>
<feature type="region of interest" description="Disordered" evidence="5">
    <location>
        <begin position="504"/>
        <end position="527"/>
    </location>
</feature>
<feature type="short sequence motif" description="Q motif">
    <location>
        <begin position="43"/>
        <end position="73"/>
    </location>
</feature>
<feature type="short sequence motif" description="DEAD box">
    <location>
        <begin position="242"/>
        <end position="245"/>
    </location>
</feature>
<feature type="binding site" evidence="3">
    <location>
        <begin position="98"/>
        <end position="105"/>
    </location>
    <ligand>
        <name>ATP</name>
        <dbReference type="ChEBI" id="CHEBI:30616"/>
    </ligand>
</feature>